<keyword id="KW-0131">Cell cycle</keyword>
<keyword id="KW-0132">Cell division</keyword>
<keyword id="KW-0175">Coiled coil</keyword>
<keyword id="KW-0963">Cytoplasm</keyword>
<keyword id="KW-0903">Direct protein sequencing</keyword>
<keyword id="KW-1185">Reference proteome</keyword>
<keyword id="KW-0717">Septation</keyword>
<protein>
    <recommendedName>
        <fullName evidence="1">Cell division protein ZapB</fullName>
    </recommendedName>
</protein>
<organism>
    <name type="scientific">Haemophilus influenzae (strain ATCC 51907 / DSM 11121 / KW20 / Rd)</name>
    <dbReference type="NCBI Taxonomy" id="71421"/>
    <lineage>
        <taxon>Bacteria</taxon>
        <taxon>Pseudomonadati</taxon>
        <taxon>Pseudomonadota</taxon>
        <taxon>Gammaproteobacteria</taxon>
        <taxon>Pasteurellales</taxon>
        <taxon>Pasteurellaceae</taxon>
        <taxon>Haemophilus</taxon>
    </lineage>
</organism>
<evidence type="ECO:0000255" key="1">
    <source>
        <dbReference type="HAMAP-Rule" id="MF_01196"/>
    </source>
</evidence>
<comment type="function">
    <text evidence="1">Non-essential, abundant cell division factor that is required for proper Z-ring formation. It is recruited early to the divisome by direct interaction with FtsZ, stimulating Z-ring assembly and thereby promoting cell division earlier in the cell cycle. Its recruitment to the Z-ring requires functional FtsA or ZipA.</text>
</comment>
<comment type="subunit">
    <text evidence="1">Homodimer. The ends of the coiled-coil dimer bind to each other, forming polymers. Interacts with FtsZ.</text>
</comment>
<comment type="subcellular location">
    <subcellularLocation>
        <location>Cytoplasm</location>
    </subcellularLocation>
    <text evidence="1">Localizes to the septum at mid-cell, in a FtsZ-like pattern.</text>
</comment>
<comment type="similarity">
    <text evidence="1">Belongs to the ZapB family.</text>
</comment>
<name>ZAPB_HAEIN</name>
<accession>P44812</accession>
<reference key="1">
    <citation type="journal article" date="1995" name="Science">
        <title>Whole-genome random sequencing and assembly of Haemophilus influenzae Rd.</title>
        <authorList>
            <person name="Fleischmann R.D."/>
            <person name="Adams M.D."/>
            <person name="White O."/>
            <person name="Clayton R.A."/>
            <person name="Kirkness E.F."/>
            <person name="Kerlavage A.R."/>
            <person name="Bult C.J."/>
            <person name="Tomb J.-F."/>
            <person name="Dougherty B.A."/>
            <person name="Merrick J.M."/>
            <person name="McKenney K."/>
            <person name="Sutton G.G."/>
            <person name="FitzHugh W."/>
            <person name="Fields C.A."/>
            <person name="Gocayne J.D."/>
            <person name="Scott J.D."/>
            <person name="Shirley R."/>
            <person name="Liu L.-I."/>
            <person name="Glodek A."/>
            <person name="Kelley J.M."/>
            <person name="Weidman J.F."/>
            <person name="Phillips C.A."/>
            <person name="Spriggs T."/>
            <person name="Hedblom E."/>
            <person name="Cotton M.D."/>
            <person name="Utterback T.R."/>
            <person name="Hanna M.C."/>
            <person name="Nguyen D.T."/>
            <person name="Saudek D.M."/>
            <person name="Brandon R.C."/>
            <person name="Fine L.D."/>
            <person name="Fritchman J.L."/>
            <person name="Fuhrmann J.L."/>
            <person name="Geoghagen N.S.M."/>
            <person name="Gnehm C.L."/>
            <person name="McDonald L.A."/>
            <person name="Small K.V."/>
            <person name="Fraser C.M."/>
            <person name="Smith H.O."/>
            <person name="Venter J.C."/>
        </authorList>
    </citation>
    <scope>NUCLEOTIDE SEQUENCE [LARGE SCALE GENOMIC DNA]</scope>
    <source>
        <strain>ATCC 51907 / DSM 11121 / KW20 / Rd</strain>
    </source>
</reference>
<reference key="2">
    <citation type="journal article" date="1998" name="Electrophoresis">
        <title>Reference map of the low molecular mass proteins of Haemophilus influenzae.</title>
        <authorList>
            <person name="Fountoulakis M."/>
            <person name="Juranville J.-F."/>
            <person name="Roeder D."/>
            <person name="Evers S."/>
            <person name="Berndt P."/>
            <person name="Langen H."/>
        </authorList>
    </citation>
    <scope>PROTEIN SEQUENCE OF 48-52</scope>
    <scope>IDENTIFICATION BY MASS SPECTROMETRY</scope>
    <source>
        <strain>ATCC 51907 / DSM 11121 / KW20 / Rd</strain>
    </source>
</reference>
<reference key="3">
    <citation type="journal article" date="2000" name="Electrophoresis">
        <title>Two-dimensional map of the proteome of Haemophilus influenzae.</title>
        <authorList>
            <person name="Langen H."/>
            <person name="Takacs B."/>
            <person name="Evers S."/>
            <person name="Berndt P."/>
            <person name="Lahm H.W."/>
            <person name="Wipf B."/>
            <person name="Gray C."/>
            <person name="Fountoulakis M."/>
        </authorList>
    </citation>
    <scope>IDENTIFICATION BY MASS SPECTROMETRY</scope>
    <source>
        <strain>ATCC 51907 / DSM 11121 / KW20 / Rd</strain>
    </source>
</reference>
<sequence>MSLEILDQLEEKIKQAVETIQLLQLEVEELKEKNAESQRNIENLQTENEQLKNEHRNWQEHIRSLLGKFDNV</sequence>
<dbReference type="EMBL" id="L42023">
    <property type="protein sequence ID" value="AAC22328.1"/>
    <property type="molecule type" value="Genomic_DNA"/>
</dbReference>
<dbReference type="PIR" id="D64156">
    <property type="entry name" value="D64156"/>
</dbReference>
<dbReference type="RefSeq" id="NP_438828.1">
    <property type="nucleotide sequence ID" value="NC_000907.1"/>
</dbReference>
<dbReference type="SMR" id="P44812"/>
<dbReference type="STRING" id="71421.HI_0668"/>
<dbReference type="EnsemblBacteria" id="AAC22328">
    <property type="protein sequence ID" value="AAC22328"/>
    <property type="gene ID" value="HI_0668"/>
</dbReference>
<dbReference type="KEGG" id="hin:HI_0668"/>
<dbReference type="PATRIC" id="fig|71421.8.peg.698"/>
<dbReference type="eggNOG" id="COG3074">
    <property type="taxonomic scope" value="Bacteria"/>
</dbReference>
<dbReference type="HOGENOM" id="CLU_171174_2_0_6"/>
<dbReference type="OrthoDB" id="6554593at2"/>
<dbReference type="PhylomeDB" id="P44812"/>
<dbReference type="BioCyc" id="HINF71421:G1GJ1-703-MONOMER"/>
<dbReference type="Proteomes" id="UP000000579">
    <property type="component" value="Chromosome"/>
</dbReference>
<dbReference type="GO" id="GO:0005737">
    <property type="term" value="C:cytoplasm"/>
    <property type="evidence" value="ECO:0007669"/>
    <property type="project" value="UniProtKB-SubCell"/>
</dbReference>
<dbReference type="GO" id="GO:0000917">
    <property type="term" value="P:division septum assembly"/>
    <property type="evidence" value="ECO:0007669"/>
    <property type="project" value="UniProtKB-KW"/>
</dbReference>
<dbReference type="GO" id="GO:0043093">
    <property type="term" value="P:FtsZ-dependent cytokinesis"/>
    <property type="evidence" value="ECO:0007669"/>
    <property type="project" value="UniProtKB-UniRule"/>
</dbReference>
<dbReference type="Gene3D" id="1.20.5.340">
    <property type="match status" value="1"/>
</dbReference>
<dbReference type="HAMAP" id="MF_01196">
    <property type="entry name" value="ZapB"/>
    <property type="match status" value="1"/>
</dbReference>
<dbReference type="InterPro" id="IPR009252">
    <property type="entry name" value="Cell_div_ZapB"/>
</dbReference>
<dbReference type="Pfam" id="PF06005">
    <property type="entry name" value="ZapB"/>
    <property type="match status" value="1"/>
</dbReference>
<feature type="chain" id="PRO_0000169697" description="Cell division protein ZapB">
    <location>
        <begin position="1"/>
        <end position="72"/>
    </location>
</feature>
<feature type="coiled-coil region" evidence="1">
    <location>
        <begin position="1"/>
        <end position="71"/>
    </location>
</feature>
<gene>
    <name evidence="1" type="primary">zapB</name>
    <name type="ordered locus">HI_0668</name>
</gene>
<proteinExistence type="evidence at protein level"/>